<protein>
    <recommendedName>
        <fullName evidence="1">Ribose import binding protein RbsB</fullName>
    </recommendedName>
</protein>
<name>RBSB_HAEIN</name>
<dbReference type="EMBL" id="L42023">
    <property type="protein sequence ID" value="AAC22162.1"/>
    <property type="molecule type" value="Genomic_DNA"/>
</dbReference>
<dbReference type="PIR" id="A64073">
    <property type="entry name" value="A64073"/>
</dbReference>
<dbReference type="RefSeq" id="NP_438662.1">
    <property type="nucleotide sequence ID" value="NC_000907.1"/>
</dbReference>
<dbReference type="SMR" id="P44737"/>
<dbReference type="STRING" id="71421.HI_0504"/>
<dbReference type="EnsemblBacteria" id="AAC22162">
    <property type="protein sequence ID" value="AAC22162"/>
    <property type="gene ID" value="HI_0504"/>
</dbReference>
<dbReference type="KEGG" id="hin:HI_0504"/>
<dbReference type="PATRIC" id="fig|71421.8.peg.523"/>
<dbReference type="eggNOG" id="COG1879">
    <property type="taxonomic scope" value="Bacteria"/>
</dbReference>
<dbReference type="HOGENOM" id="CLU_037628_3_2_6"/>
<dbReference type="OrthoDB" id="4827464at2"/>
<dbReference type="PhylomeDB" id="P44737"/>
<dbReference type="BioCyc" id="HINF71421:G1GJ1-517-MONOMER"/>
<dbReference type="Proteomes" id="UP000000579">
    <property type="component" value="Chromosome"/>
</dbReference>
<dbReference type="GO" id="GO:0030288">
    <property type="term" value="C:outer membrane-bounded periplasmic space"/>
    <property type="evidence" value="ECO:0000318"/>
    <property type="project" value="GO_Central"/>
</dbReference>
<dbReference type="GO" id="GO:0048029">
    <property type="term" value="F:monosaccharide binding"/>
    <property type="evidence" value="ECO:0000318"/>
    <property type="project" value="GO_Central"/>
</dbReference>
<dbReference type="GO" id="GO:0055085">
    <property type="term" value="P:transmembrane transport"/>
    <property type="evidence" value="ECO:0000318"/>
    <property type="project" value="GO_Central"/>
</dbReference>
<dbReference type="CDD" id="cd06323">
    <property type="entry name" value="PBP1_ribose_binding"/>
    <property type="match status" value="1"/>
</dbReference>
<dbReference type="FunFam" id="3.40.50.2300:FF:000036">
    <property type="entry name" value="D-ribose ABC transporter substrate-binding protein"/>
    <property type="match status" value="1"/>
</dbReference>
<dbReference type="Gene3D" id="3.40.50.2300">
    <property type="match status" value="2"/>
</dbReference>
<dbReference type="InterPro" id="IPR028082">
    <property type="entry name" value="Peripla_BP_I"/>
</dbReference>
<dbReference type="InterPro" id="IPR025997">
    <property type="entry name" value="SBP_2_dom"/>
</dbReference>
<dbReference type="NCBIfam" id="NF007936">
    <property type="entry name" value="PRK10653.1"/>
    <property type="match status" value="1"/>
</dbReference>
<dbReference type="PANTHER" id="PTHR46847">
    <property type="entry name" value="D-ALLOSE-BINDING PERIPLASMIC PROTEIN-RELATED"/>
    <property type="match status" value="1"/>
</dbReference>
<dbReference type="PANTHER" id="PTHR46847:SF1">
    <property type="entry name" value="D-ALLOSE-BINDING PERIPLASMIC PROTEIN-RELATED"/>
    <property type="match status" value="1"/>
</dbReference>
<dbReference type="Pfam" id="PF13407">
    <property type="entry name" value="Peripla_BP_4"/>
    <property type="match status" value="1"/>
</dbReference>
<dbReference type="SUPFAM" id="SSF53822">
    <property type="entry name" value="Periplasmic binding protein-like I"/>
    <property type="match status" value="1"/>
</dbReference>
<organism>
    <name type="scientific">Haemophilus influenzae (strain ATCC 51907 / DSM 11121 / KW20 / Rd)</name>
    <dbReference type="NCBI Taxonomy" id="71421"/>
    <lineage>
        <taxon>Bacteria</taxon>
        <taxon>Pseudomonadati</taxon>
        <taxon>Pseudomonadota</taxon>
        <taxon>Gammaproteobacteria</taxon>
        <taxon>Pasteurellales</taxon>
        <taxon>Pasteurellaceae</taxon>
        <taxon>Haemophilus</taxon>
    </lineage>
</organism>
<evidence type="ECO:0000250" key="1">
    <source>
        <dbReference type="UniProtKB" id="P02925"/>
    </source>
</evidence>
<evidence type="ECO:0000269" key="2">
    <source>
    </source>
</evidence>
<evidence type="ECO:0000305" key="3"/>
<feature type="signal peptide" evidence="2">
    <location>
        <begin position="1"/>
        <end position="23"/>
    </location>
</feature>
<feature type="chain" id="PRO_0000031735" description="Ribose import binding protein RbsB">
    <location>
        <begin position="24"/>
        <end position="292"/>
    </location>
</feature>
<gene>
    <name type="primary">rbsB</name>
    <name type="ordered locus">HI_0504</name>
</gene>
<sequence length="292" mass="30315">MKKLTALTSAVLLGLAVSSSASAQDTIALAVSTLDNPFFVTLKDGAQKKADELGYKLVVLDSQNDPAKELANIEDLTVRGAKILLINPTASEAVGNAVAIANRKHIPVITLDRGAAKGNVVSHIASDNIAGGKMAGDFIAQKLGDNAKVIQLEGIAGTSAARERGEGFKQAIDAHKFNVLASQPADFDRTKGLNVTENLLASKGDVQAIFAQNDEMALGALRAVKAANKKVLIVGFDGTDDGVKAVKSGKMAATIAQQPELIGSLGVVTADKILKGEKVEAKIPVDLKVISE</sequence>
<reference key="1">
    <citation type="journal article" date="1995" name="Science">
        <title>Whole-genome random sequencing and assembly of Haemophilus influenzae Rd.</title>
        <authorList>
            <person name="Fleischmann R.D."/>
            <person name="Adams M.D."/>
            <person name="White O."/>
            <person name="Clayton R.A."/>
            <person name="Kirkness E.F."/>
            <person name="Kerlavage A.R."/>
            <person name="Bult C.J."/>
            <person name="Tomb J.-F."/>
            <person name="Dougherty B.A."/>
            <person name="Merrick J.M."/>
            <person name="McKenney K."/>
            <person name="Sutton G.G."/>
            <person name="FitzHugh W."/>
            <person name="Fields C.A."/>
            <person name="Gocayne J.D."/>
            <person name="Scott J.D."/>
            <person name="Shirley R."/>
            <person name="Liu L.-I."/>
            <person name="Glodek A."/>
            <person name="Kelley J.M."/>
            <person name="Weidman J.F."/>
            <person name="Phillips C.A."/>
            <person name="Spriggs T."/>
            <person name="Hedblom E."/>
            <person name="Cotton M.D."/>
            <person name="Utterback T.R."/>
            <person name="Hanna M.C."/>
            <person name="Nguyen D.T."/>
            <person name="Saudek D.M."/>
            <person name="Brandon R.C."/>
            <person name="Fine L.D."/>
            <person name="Fritchman J.L."/>
            <person name="Fuhrmann J.L."/>
            <person name="Geoghagen N.S.M."/>
            <person name="Gnehm C.L."/>
            <person name="McDonald L.A."/>
            <person name="Small K.V."/>
            <person name="Fraser C.M."/>
            <person name="Smith H.O."/>
            <person name="Venter J.C."/>
        </authorList>
    </citation>
    <scope>NUCLEOTIDE SEQUENCE [LARGE SCALE GENOMIC DNA]</scope>
    <source>
        <strain>ATCC 51907 / DSM 11121 / KW20 / Rd</strain>
    </source>
</reference>
<reference key="2">
    <citation type="journal article" date="2000" name="Electrophoresis">
        <title>Two-dimensional map of the proteome of Haemophilus influenzae.</title>
        <authorList>
            <person name="Langen H."/>
            <person name="Takacs B."/>
            <person name="Evers S."/>
            <person name="Berndt P."/>
            <person name="Lahm H.W."/>
            <person name="Wipf B."/>
            <person name="Gray C."/>
            <person name="Fountoulakis M."/>
        </authorList>
    </citation>
    <scope>PROTEIN SEQUENCE OF 24-30</scope>
    <source>
        <strain>ATCC 51907 / DSM 11121 / KW20 / Rd</strain>
    </source>
</reference>
<comment type="function">
    <text evidence="1">Part of the ABC transporter complex RbsABC involved in ribose import. Binds ribose.</text>
</comment>
<comment type="subunit">
    <text evidence="1">The complex is composed of an ATP-binding protein (RbsA), two transmembrane proteins (RbsC) and a solute-binding protein (RbsB).</text>
</comment>
<comment type="subcellular location">
    <subcellularLocation>
        <location evidence="1">Periplasm</location>
    </subcellularLocation>
</comment>
<comment type="similarity">
    <text evidence="3">Belongs to the bacterial solute-binding protein 2 family.</text>
</comment>
<proteinExistence type="evidence at protein level"/>
<keyword id="KW-0903">Direct protein sequencing</keyword>
<keyword id="KW-0574">Periplasm</keyword>
<keyword id="KW-1185">Reference proteome</keyword>
<keyword id="KW-0732">Signal</keyword>
<keyword id="KW-0762">Sugar transport</keyword>
<keyword id="KW-0813">Transport</keyword>
<accession>P44737</accession>